<gene>
    <name type="primary">Otud7a</name>
    <name type="synonym">Cezanne2</name>
    <name type="synonym">Otud7</name>
</gene>
<organism>
    <name type="scientific">Mus musculus</name>
    <name type="common">Mouse</name>
    <dbReference type="NCBI Taxonomy" id="10090"/>
    <lineage>
        <taxon>Eukaryota</taxon>
        <taxon>Metazoa</taxon>
        <taxon>Chordata</taxon>
        <taxon>Craniata</taxon>
        <taxon>Vertebrata</taxon>
        <taxon>Euteleostomi</taxon>
        <taxon>Mammalia</taxon>
        <taxon>Eutheria</taxon>
        <taxon>Euarchontoglires</taxon>
        <taxon>Glires</taxon>
        <taxon>Rodentia</taxon>
        <taxon>Myomorpha</taxon>
        <taxon>Muroidea</taxon>
        <taxon>Muridae</taxon>
        <taxon>Murinae</taxon>
        <taxon>Mus</taxon>
        <taxon>Mus</taxon>
    </lineage>
</organism>
<protein>
    <recommendedName>
        <fullName>OTU domain-containing protein 7A</fullName>
        <ecNumber>3.4.19.12</ecNumber>
    </recommendedName>
    <alternativeName>
        <fullName>Zinc finger protein Cezanne 2</fullName>
    </alternativeName>
</protein>
<keyword id="KW-0963">Cytoplasm</keyword>
<keyword id="KW-0378">Hydrolase</keyword>
<keyword id="KW-0479">Metal-binding</keyword>
<keyword id="KW-0488">Methylation</keyword>
<keyword id="KW-0539">Nucleus</keyword>
<keyword id="KW-0597">Phosphoprotein</keyword>
<keyword id="KW-0645">Protease</keyword>
<keyword id="KW-1185">Reference proteome</keyword>
<keyword id="KW-0788">Thiol protease</keyword>
<keyword id="KW-0833">Ubl conjugation pathway</keyword>
<keyword id="KW-0862">Zinc</keyword>
<keyword id="KW-0863">Zinc-finger</keyword>
<evidence type="ECO:0000250" key="1"/>
<evidence type="ECO:0000250" key="2">
    <source>
        <dbReference type="UniProtKB" id="Q8TE49"/>
    </source>
</evidence>
<evidence type="ECO:0000255" key="3"/>
<evidence type="ECO:0000255" key="4">
    <source>
        <dbReference type="PROSITE-ProRule" id="PRU00139"/>
    </source>
</evidence>
<evidence type="ECO:0000255" key="5">
    <source>
        <dbReference type="PROSITE-ProRule" id="PRU00451"/>
    </source>
</evidence>
<evidence type="ECO:0000256" key="6">
    <source>
        <dbReference type="SAM" id="MobiDB-lite"/>
    </source>
</evidence>
<evidence type="ECO:0000305" key="7"/>
<evidence type="ECO:0007744" key="8">
    <source>
    </source>
</evidence>
<evidence type="ECO:0007744" key="9">
    <source>
    </source>
</evidence>
<feature type="chain" id="PRO_0000188790" description="OTU domain-containing protein 7A">
    <location>
        <begin position="1"/>
        <end position="926"/>
    </location>
</feature>
<feature type="domain" description="OTU" evidence="4">
    <location>
        <begin position="201"/>
        <end position="377"/>
    </location>
</feature>
<feature type="zinc finger region" description="A20-type" evidence="5">
    <location>
        <begin position="884"/>
        <end position="919"/>
    </location>
</feature>
<feature type="region of interest" description="TRAF-binding" evidence="1">
    <location>
        <begin position="170"/>
        <end position="413"/>
    </location>
</feature>
<feature type="region of interest" description="Catalytic" evidence="1">
    <location>
        <begin position="185"/>
        <end position="452"/>
    </location>
</feature>
<feature type="region of interest" description="Disordered" evidence="6">
    <location>
        <begin position="455"/>
        <end position="517"/>
    </location>
</feature>
<feature type="region of interest" description="Disordered" evidence="6">
    <location>
        <begin position="540"/>
        <end position="615"/>
    </location>
</feature>
<feature type="region of interest" description="Disordered" evidence="6">
    <location>
        <begin position="671"/>
        <end position="779"/>
    </location>
</feature>
<feature type="short sequence motif" description="Nuclear localization signal" evidence="3">
    <location>
        <begin position="497"/>
        <end position="512"/>
    </location>
</feature>
<feature type="compositionally biased region" description="Low complexity" evidence="6">
    <location>
        <begin position="484"/>
        <end position="494"/>
    </location>
</feature>
<feature type="compositionally biased region" description="Basic and acidic residues" evidence="6">
    <location>
        <begin position="495"/>
        <end position="513"/>
    </location>
</feature>
<feature type="compositionally biased region" description="Low complexity" evidence="6">
    <location>
        <begin position="579"/>
        <end position="595"/>
    </location>
</feature>
<feature type="compositionally biased region" description="Low complexity" evidence="6">
    <location>
        <begin position="680"/>
        <end position="691"/>
    </location>
</feature>
<feature type="compositionally biased region" description="Low complexity" evidence="6">
    <location>
        <begin position="731"/>
        <end position="750"/>
    </location>
</feature>
<feature type="compositionally biased region" description="Gly residues" evidence="6">
    <location>
        <begin position="751"/>
        <end position="767"/>
    </location>
</feature>
<feature type="active site" evidence="1">
    <location>
        <position position="209"/>
    </location>
</feature>
<feature type="active site" description="Nucleophile" evidence="1">
    <location>
        <position position="212"/>
    </location>
</feature>
<feature type="active site" description="Proton acceptor" evidence="1">
    <location>
        <position position="370"/>
    </location>
</feature>
<feature type="binding site" evidence="5">
    <location>
        <position position="890"/>
    </location>
    <ligand>
        <name>Zn(2+)</name>
        <dbReference type="ChEBI" id="CHEBI:29105"/>
    </ligand>
</feature>
<feature type="binding site" evidence="5">
    <location>
        <position position="895"/>
    </location>
    <ligand>
        <name>Zn(2+)</name>
        <dbReference type="ChEBI" id="CHEBI:29105"/>
    </ligand>
</feature>
<feature type="binding site" evidence="5">
    <location>
        <position position="907"/>
    </location>
    <ligand>
        <name>Zn(2+)</name>
        <dbReference type="ChEBI" id="CHEBI:29105"/>
    </ligand>
</feature>
<feature type="binding site" evidence="5">
    <location>
        <position position="910"/>
    </location>
    <ligand>
        <name>Zn(2+)</name>
        <dbReference type="ChEBI" id="CHEBI:29105"/>
    </ligand>
</feature>
<feature type="modified residue" description="Phosphoserine" evidence="8">
    <location>
        <position position="121"/>
    </location>
</feature>
<feature type="modified residue" description="Omega-N-methylarginine" evidence="9">
    <location>
        <position position="880"/>
    </location>
</feature>
<accession>Q8R554</accession>
<comment type="function">
    <text evidence="2">Deubiquitinase, which cleaves 'Lys-11'-linked polyubiquitin chains.</text>
</comment>
<comment type="catalytic activity">
    <reaction>
        <text>Thiol-dependent hydrolysis of ester, thioester, amide, peptide and isopeptide bonds formed by the C-terminal Gly of ubiquitin (a 76-residue protein attached to proteins as an intracellular targeting signal).</text>
        <dbReference type="EC" id="3.4.19.12"/>
    </reaction>
</comment>
<comment type="subcellular location">
    <subcellularLocation>
        <location evidence="1">Cytoplasm</location>
    </subcellularLocation>
    <subcellularLocation>
        <location evidence="1">Nucleus</location>
    </subcellularLocation>
</comment>
<comment type="similarity">
    <text evidence="7">Belongs to the peptidase C64 family.</text>
</comment>
<name>OTU7A_MOUSE</name>
<proteinExistence type="evidence at protein level"/>
<dbReference type="EC" id="3.4.19.12"/>
<dbReference type="EMBL" id="AJ430384">
    <property type="protein sequence ID" value="CAD23048.1"/>
    <property type="molecule type" value="mRNA"/>
</dbReference>
<dbReference type="CCDS" id="CCDS21330.1"/>
<dbReference type="RefSeq" id="NP_570950.1">
    <property type="nucleotide sequence ID" value="NM_130880.1"/>
</dbReference>
<dbReference type="BMRB" id="Q8R554"/>
<dbReference type="SMR" id="Q8R554"/>
<dbReference type="BioGRID" id="228387">
    <property type="interactions" value="47"/>
</dbReference>
<dbReference type="FunCoup" id="Q8R554">
    <property type="interactions" value="1759"/>
</dbReference>
<dbReference type="STRING" id="10090.ENSMUSP00000057282"/>
<dbReference type="MEROPS" id="C64.002"/>
<dbReference type="GlyGen" id="Q8R554">
    <property type="glycosylation" value="3 sites, 1 N-linked glycan (1 site)"/>
</dbReference>
<dbReference type="iPTMnet" id="Q8R554"/>
<dbReference type="PhosphoSitePlus" id="Q8R554"/>
<dbReference type="PaxDb" id="10090-ENSMUSP00000057282"/>
<dbReference type="PeptideAtlas" id="Q8R554"/>
<dbReference type="ProteomicsDB" id="287746"/>
<dbReference type="Antibodypedia" id="22563">
    <property type="antibodies" value="91 antibodies from 19 providers"/>
</dbReference>
<dbReference type="DNASU" id="170711"/>
<dbReference type="Ensembl" id="ENSMUST00000058476.14">
    <property type="protein sequence ID" value="ENSMUSP00000057282.8"/>
    <property type="gene ID" value="ENSMUSG00000033510.15"/>
</dbReference>
<dbReference type="GeneID" id="170711"/>
<dbReference type="KEGG" id="mmu:170711"/>
<dbReference type="UCSC" id="uc009hfl.1">
    <property type="organism name" value="mouse"/>
</dbReference>
<dbReference type="AGR" id="MGI:2158505"/>
<dbReference type="CTD" id="161725"/>
<dbReference type="MGI" id="MGI:2158505">
    <property type="gene designation" value="Otud7a"/>
</dbReference>
<dbReference type="VEuPathDB" id="HostDB:ENSMUSG00000033510"/>
<dbReference type="eggNOG" id="KOG4345">
    <property type="taxonomic scope" value="Eukaryota"/>
</dbReference>
<dbReference type="GeneTree" id="ENSGT00940000158999"/>
<dbReference type="InParanoid" id="Q8R554"/>
<dbReference type="OMA" id="HGKMGRS"/>
<dbReference type="OrthoDB" id="10064699at2759"/>
<dbReference type="PhylomeDB" id="Q8R554"/>
<dbReference type="TreeFam" id="TF323312"/>
<dbReference type="Reactome" id="R-MMU-5689896">
    <property type="pathway name" value="Ovarian tumor domain proteases"/>
</dbReference>
<dbReference type="BioGRID-ORCS" id="170711">
    <property type="hits" value="3 hits in 77 CRISPR screens"/>
</dbReference>
<dbReference type="ChiTaRS" id="Otud7a">
    <property type="organism name" value="mouse"/>
</dbReference>
<dbReference type="PRO" id="PR:Q8R554"/>
<dbReference type="Proteomes" id="UP000000589">
    <property type="component" value="Chromosome 7"/>
</dbReference>
<dbReference type="RNAct" id="Q8R554">
    <property type="molecule type" value="protein"/>
</dbReference>
<dbReference type="Bgee" id="ENSMUSG00000033510">
    <property type="expression patterns" value="Expressed in substantia nigra and 88 other cell types or tissues"/>
</dbReference>
<dbReference type="ExpressionAtlas" id="Q8R554">
    <property type="expression patterns" value="baseline and differential"/>
</dbReference>
<dbReference type="GO" id="GO:0005737">
    <property type="term" value="C:cytoplasm"/>
    <property type="evidence" value="ECO:0007669"/>
    <property type="project" value="UniProtKB-SubCell"/>
</dbReference>
<dbReference type="GO" id="GO:0005634">
    <property type="term" value="C:nucleus"/>
    <property type="evidence" value="ECO:0007669"/>
    <property type="project" value="UniProtKB-SubCell"/>
</dbReference>
<dbReference type="GO" id="GO:0004843">
    <property type="term" value="F:cysteine-type deubiquitinase activity"/>
    <property type="evidence" value="ECO:0000250"/>
    <property type="project" value="UniProtKB"/>
</dbReference>
<dbReference type="GO" id="GO:0003677">
    <property type="term" value="F:DNA binding"/>
    <property type="evidence" value="ECO:0007669"/>
    <property type="project" value="InterPro"/>
</dbReference>
<dbReference type="GO" id="GO:0008270">
    <property type="term" value="F:zinc ion binding"/>
    <property type="evidence" value="ECO:0007669"/>
    <property type="project" value="UniProtKB-KW"/>
</dbReference>
<dbReference type="GO" id="GO:0035871">
    <property type="term" value="P:protein K11-linked deubiquitination"/>
    <property type="evidence" value="ECO:0000250"/>
    <property type="project" value="UniProtKB"/>
</dbReference>
<dbReference type="GO" id="GO:0006508">
    <property type="term" value="P:proteolysis"/>
    <property type="evidence" value="ECO:0007669"/>
    <property type="project" value="UniProtKB-KW"/>
</dbReference>
<dbReference type="CDD" id="cd14347">
    <property type="entry name" value="UBA_Cezanne_like"/>
    <property type="match status" value="1"/>
</dbReference>
<dbReference type="FunFam" id="1.10.8.10:FF:000017">
    <property type="entry name" value="OTU domain-containing protein 7A"/>
    <property type="match status" value="1"/>
</dbReference>
<dbReference type="Gene3D" id="1.20.5.4770">
    <property type="match status" value="1"/>
</dbReference>
<dbReference type="Gene3D" id="1.10.8.10">
    <property type="entry name" value="DNA helicase RuvA subunit, C-terminal domain"/>
    <property type="match status" value="1"/>
</dbReference>
<dbReference type="InterPro" id="IPR051346">
    <property type="entry name" value="OTU_Deubiquitinase"/>
</dbReference>
<dbReference type="InterPro" id="IPR003323">
    <property type="entry name" value="OTU_dom"/>
</dbReference>
<dbReference type="InterPro" id="IPR054109">
    <property type="entry name" value="UBA_8"/>
</dbReference>
<dbReference type="InterPro" id="IPR002653">
    <property type="entry name" value="Znf_A20"/>
</dbReference>
<dbReference type="PANTHER" id="PTHR13367:SF9">
    <property type="entry name" value="OTU DOMAIN-CONTAINING PROTEIN 7A"/>
    <property type="match status" value="1"/>
</dbReference>
<dbReference type="PANTHER" id="PTHR13367">
    <property type="entry name" value="UBIQUITIN THIOESTERASE"/>
    <property type="match status" value="1"/>
</dbReference>
<dbReference type="Pfam" id="PF02338">
    <property type="entry name" value="OTU"/>
    <property type="match status" value="1"/>
</dbReference>
<dbReference type="Pfam" id="PF22566">
    <property type="entry name" value="UBA_8"/>
    <property type="match status" value="1"/>
</dbReference>
<dbReference type="Pfam" id="PF01754">
    <property type="entry name" value="zf-A20"/>
    <property type="match status" value="1"/>
</dbReference>
<dbReference type="SUPFAM" id="SSF57716">
    <property type="entry name" value="Glucocorticoid receptor-like (DNA-binding domain)"/>
    <property type="match status" value="1"/>
</dbReference>
<dbReference type="PROSITE" id="PS50802">
    <property type="entry name" value="OTU"/>
    <property type="match status" value="1"/>
</dbReference>
<dbReference type="PROSITE" id="PS51036">
    <property type="entry name" value="ZF_A20"/>
    <property type="match status" value="1"/>
</dbReference>
<reference key="1">
    <citation type="submission" date="2002-02" db="EMBL/GenBank/DDBJ databases">
        <title>Isolation of a novel murine gene, Cezanne 2.</title>
        <authorList>
            <person name="Evans P.C."/>
            <person name="Coadwell W.J."/>
            <person name="Kilshaw P.J."/>
        </authorList>
    </citation>
    <scope>NUCLEOTIDE SEQUENCE [MRNA]</scope>
    <source>
        <strain>C57BL/6J</strain>
    </source>
</reference>
<reference key="2">
    <citation type="journal article" date="2010" name="Cell">
        <title>A tissue-specific atlas of mouse protein phosphorylation and expression.</title>
        <authorList>
            <person name="Huttlin E.L."/>
            <person name="Jedrychowski M.P."/>
            <person name="Elias J.E."/>
            <person name="Goswami T."/>
            <person name="Rad R."/>
            <person name="Beausoleil S.A."/>
            <person name="Villen J."/>
            <person name="Haas W."/>
            <person name="Sowa M.E."/>
            <person name="Gygi S.P."/>
        </authorList>
    </citation>
    <scope>PHOSPHORYLATION [LARGE SCALE ANALYSIS] AT SER-121</scope>
    <scope>IDENTIFICATION BY MASS SPECTROMETRY [LARGE SCALE ANALYSIS]</scope>
    <source>
        <tissue>Brain</tissue>
    </source>
</reference>
<reference key="3">
    <citation type="journal article" date="2014" name="Mol. Cell. Proteomics">
        <title>Immunoaffinity enrichment and mass spectrometry analysis of protein methylation.</title>
        <authorList>
            <person name="Guo A."/>
            <person name="Gu H."/>
            <person name="Zhou J."/>
            <person name="Mulhern D."/>
            <person name="Wang Y."/>
            <person name="Lee K.A."/>
            <person name="Yang V."/>
            <person name="Aguiar M."/>
            <person name="Kornhauser J."/>
            <person name="Jia X."/>
            <person name="Ren J."/>
            <person name="Beausoleil S.A."/>
            <person name="Silva J.C."/>
            <person name="Vemulapalli V."/>
            <person name="Bedford M.T."/>
            <person name="Comb M.J."/>
        </authorList>
    </citation>
    <scope>METHYLATION [LARGE SCALE ANALYSIS] AT ARG-880</scope>
    <scope>IDENTIFICATION BY MASS SPECTROMETRY [LARGE SCALE ANALYSIS]</scope>
    <source>
        <tissue>Brain</tissue>
    </source>
</reference>
<sequence>MVSSLLPNPPSAECWAALLHDPMTLDMDAVLSDFVRSTGAEPGLARDLLEGKNWDLTAALSDYEQLRQVHTANLPHVFNEGRCAKQAERELPQPGHKVERPCLQRQDDIAQAEKRLSRGISHASSAIVSLARSHVANECNNEQFPLEMPIYTFQLPDLSVYSEDFRSFIERDLIEQATMVALEQAGRLNWWSTVCTSCKRLLPLATTGDGNCLLHAASLGMWGFHDRDLVLRKALYTMMRTGAEREALKRRWRWQQTQQNKEEEWEREWTELLKLASSEPRTHFSKNGSGTGGGVDNSEDPVYESLEEFHVFVLAHILRRPIVVVADTMLRDSGGEAFAPIPFGGIYLPLEVPPNRCHCSPLVLAYDQAHFSALVSMEQRDQQREQAVIPLTDSEHKLLPLHFAVDPGKDWEWGKDDNDNARLANLILSLEAKLNLLHSYMNVTWIRIPSETRAPLAQPESPTASAGEDVQSLAESLDSDRDSVCSNSNSNNGKNGKDKEKEKQRKDKDKTRADSVANKLGSFSKTLGIKLKKNMGGLGGLVHGKMGRANSANGKNGDSAERNKEKKSKSRKGSKEESGASASTSPSEKTTPSPTDKASGASPADKGSGSRGDAWKYSTDVKLSLNILRAAMQGERKFIFAGLLLTSHRHQFHEEMIGYYLTSAQERFSAEQEQRRRDAAAAAAAATATATVKRPARRPEAEGAPGPERASPGPTAAQPTQLVLKLKERPSPGTGASARAARAAGGAASPGPGGGARRAAPGTGGPTPGRSPPAPARQSVIHVQAAARDEACAPTVGALRPCATYPQQNRSLWSQSYSPARSALRTVNTVESLAPGGADAPGPAEHKSQTYSNGFGAARDGLEFADADAPAARSNAECGRGGPGPAQRRCQRENCAFYGRAETEHFCSYCYREELRRRREARAARP</sequence>